<feature type="chain" id="PRO_1000076203" description="Aspartyl/glutamyl-tRNA(Asn/Gln) amidotransferase subunit C">
    <location>
        <begin position="1"/>
        <end position="93"/>
    </location>
</feature>
<name>GATC_METAR</name>
<dbReference type="EC" id="6.3.5.-" evidence="1"/>
<dbReference type="EMBL" id="AM114193">
    <property type="protein sequence ID" value="CAJ37515.1"/>
    <property type="molecule type" value="Genomic_DNA"/>
</dbReference>
<dbReference type="RefSeq" id="WP_012035067.1">
    <property type="nucleotide sequence ID" value="NC_009464.1"/>
</dbReference>
<dbReference type="SMR" id="Q0W278"/>
<dbReference type="STRING" id="351160.RCIX2429"/>
<dbReference type="GeneID" id="5145324"/>
<dbReference type="KEGG" id="rci:RCIX2429"/>
<dbReference type="eggNOG" id="arCOG02726">
    <property type="taxonomic scope" value="Archaea"/>
</dbReference>
<dbReference type="OrthoDB" id="15210at2157"/>
<dbReference type="Proteomes" id="UP000000663">
    <property type="component" value="Chromosome"/>
</dbReference>
<dbReference type="GO" id="GO:0050566">
    <property type="term" value="F:asparaginyl-tRNA synthase (glutamine-hydrolyzing) activity"/>
    <property type="evidence" value="ECO:0007669"/>
    <property type="project" value="RHEA"/>
</dbReference>
<dbReference type="GO" id="GO:0005524">
    <property type="term" value="F:ATP binding"/>
    <property type="evidence" value="ECO:0007669"/>
    <property type="project" value="UniProtKB-KW"/>
</dbReference>
<dbReference type="GO" id="GO:0050567">
    <property type="term" value="F:glutaminyl-tRNA synthase (glutamine-hydrolyzing) activity"/>
    <property type="evidence" value="ECO:0007669"/>
    <property type="project" value="UniProtKB-UniRule"/>
</dbReference>
<dbReference type="GO" id="GO:0070681">
    <property type="term" value="P:glutaminyl-tRNAGln biosynthesis via transamidation"/>
    <property type="evidence" value="ECO:0007669"/>
    <property type="project" value="TreeGrafter"/>
</dbReference>
<dbReference type="GO" id="GO:0006450">
    <property type="term" value="P:regulation of translational fidelity"/>
    <property type="evidence" value="ECO:0007669"/>
    <property type="project" value="InterPro"/>
</dbReference>
<dbReference type="GO" id="GO:0006412">
    <property type="term" value="P:translation"/>
    <property type="evidence" value="ECO:0007669"/>
    <property type="project" value="UniProtKB-UniRule"/>
</dbReference>
<dbReference type="Gene3D" id="1.10.20.60">
    <property type="entry name" value="Glu-tRNAGln amidotransferase C subunit, N-terminal domain"/>
    <property type="match status" value="1"/>
</dbReference>
<dbReference type="HAMAP" id="MF_00122">
    <property type="entry name" value="GatC"/>
    <property type="match status" value="1"/>
</dbReference>
<dbReference type="InterPro" id="IPR036113">
    <property type="entry name" value="Asp/Glu-ADT_sf_sub_c"/>
</dbReference>
<dbReference type="InterPro" id="IPR003837">
    <property type="entry name" value="GatC"/>
</dbReference>
<dbReference type="NCBIfam" id="TIGR00135">
    <property type="entry name" value="gatC"/>
    <property type="match status" value="1"/>
</dbReference>
<dbReference type="PANTHER" id="PTHR15004">
    <property type="entry name" value="GLUTAMYL-TRNA(GLN) AMIDOTRANSFERASE SUBUNIT C, MITOCHONDRIAL"/>
    <property type="match status" value="1"/>
</dbReference>
<dbReference type="PANTHER" id="PTHR15004:SF0">
    <property type="entry name" value="GLUTAMYL-TRNA(GLN) AMIDOTRANSFERASE SUBUNIT C, MITOCHONDRIAL"/>
    <property type="match status" value="1"/>
</dbReference>
<dbReference type="Pfam" id="PF02686">
    <property type="entry name" value="GatC"/>
    <property type="match status" value="1"/>
</dbReference>
<dbReference type="SUPFAM" id="SSF141000">
    <property type="entry name" value="Glu-tRNAGln amidotransferase C subunit"/>
    <property type="match status" value="1"/>
</dbReference>
<protein>
    <recommendedName>
        <fullName evidence="1">Aspartyl/glutamyl-tRNA(Asn/Gln) amidotransferase subunit C</fullName>
        <shortName evidence="1">Asp/Glu-ADT subunit C</shortName>
        <ecNumber evidence="1">6.3.5.-</ecNumber>
    </recommendedName>
</protein>
<gene>
    <name evidence="1" type="primary">gatC</name>
    <name type="ordered locus">UNCMA_07380</name>
    <name type="ORF">RCIX2429</name>
</gene>
<comment type="function">
    <text evidence="1">Allows the formation of correctly charged Asn-tRNA(Asn) or Gln-tRNA(Gln) through the transamidation of misacylated Asp-tRNA(Asn) or Glu-tRNA(Gln) in organisms which lack either or both of asparaginyl-tRNA or glutaminyl-tRNA synthetases. The reaction takes place in the presence of glutamine and ATP through an activated phospho-Asp-tRNA(Asn) or phospho-Glu-tRNA(Gln).</text>
</comment>
<comment type="catalytic activity">
    <reaction evidence="1">
        <text>L-glutamyl-tRNA(Gln) + L-glutamine + ATP + H2O = L-glutaminyl-tRNA(Gln) + L-glutamate + ADP + phosphate + H(+)</text>
        <dbReference type="Rhea" id="RHEA:17521"/>
        <dbReference type="Rhea" id="RHEA-COMP:9681"/>
        <dbReference type="Rhea" id="RHEA-COMP:9684"/>
        <dbReference type="ChEBI" id="CHEBI:15377"/>
        <dbReference type="ChEBI" id="CHEBI:15378"/>
        <dbReference type="ChEBI" id="CHEBI:29985"/>
        <dbReference type="ChEBI" id="CHEBI:30616"/>
        <dbReference type="ChEBI" id="CHEBI:43474"/>
        <dbReference type="ChEBI" id="CHEBI:58359"/>
        <dbReference type="ChEBI" id="CHEBI:78520"/>
        <dbReference type="ChEBI" id="CHEBI:78521"/>
        <dbReference type="ChEBI" id="CHEBI:456216"/>
    </reaction>
</comment>
<comment type="catalytic activity">
    <reaction evidence="1">
        <text>L-aspartyl-tRNA(Asn) + L-glutamine + ATP + H2O = L-asparaginyl-tRNA(Asn) + L-glutamate + ADP + phosphate + 2 H(+)</text>
        <dbReference type="Rhea" id="RHEA:14513"/>
        <dbReference type="Rhea" id="RHEA-COMP:9674"/>
        <dbReference type="Rhea" id="RHEA-COMP:9677"/>
        <dbReference type="ChEBI" id="CHEBI:15377"/>
        <dbReference type="ChEBI" id="CHEBI:15378"/>
        <dbReference type="ChEBI" id="CHEBI:29985"/>
        <dbReference type="ChEBI" id="CHEBI:30616"/>
        <dbReference type="ChEBI" id="CHEBI:43474"/>
        <dbReference type="ChEBI" id="CHEBI:58359"/>
        <dbReference type="ChEBI" id="CHEBI:78515"/>
        <dbReference type="ChEBI" id="CHEBI:78516"/>
        <dbReference type="ChEBI" id="CHEBI:456216"/>
    </reaction>
</comment>
<comment type="subunit">
    <text evidence="1">Heterotrimer of A, B and C subunits.</text>
</comment>
<comment type="similarity">
    <text evidence="1">Belongs to the GatC family.</text>
</comment>
<reference key="1">
    <citation type="journal article" date="2006" name="Science">
        <title>Genome of rice cluster I archaea -- the key methane producers in the rice rhizosphere.</title>
        <authorList>
            <person name="Erkel C."/>
            <person name="Kube M."/>
            <person name="Reinhardt R."/>
            <person name="Liesack W."/>
        </authorList>
    </citation>
    <scope>NUCLEOTIDE SEQUENCE [LARGE SCALE GENOMIC DNA]</scope>
    <source>
        <strain>DSM 22066 / NBRC 105507 / MRE50</strain>
    </source>
</reference>
<organism>
    <name type="scientific">Methanocella arvoryzae (strain DSM 22066 / NBRC 105507 / MRE50)</name>
    <dbReference type="NCBI Taxonomy" id="351160"/>
    <lineage>
        <taxon>Archaea</taxon>
        <taxon>Methanobacteriati</taxon>
        <taxon>Methanobacteriota</taxon>
        <taxon>Stenosarchaea group</taxon>
        <taxon>Methanomicrobia</taxon>
        <taxon>Methanocellales</taxon>
        <taxon>Methanocellaceae</taxon>
        <taxon>Methanocella</taxon>
    </lineage>
</organism>
<proteinExistence type="inferred from homology"/>
<sequence length="93" mass="10348">MITEKDVEHIGSLACIDLSPEETGLFAKQFNSILDYFRELDEVNTDGVEPTHHVIGLTNVFREDVAGESLTQEECIANAARKEKGFIKGPRIV</sequence>
<evidence type="ECO:0000255" key="1">
    <source>
        <dbReference type="HAMAP-Rule" id="MF_00122"/>
    </source>
</evidence>
<keyword id="KW-0067">ATP-binding</keyword>
<keyword id="KW-0436">Ligase</keyword>
<keyword id="KW-0547">Nucleotide-binding</keyword>
<keyword id="KW-0648">Protein biosynthesis</keyword>
<keyword id="KW-1185">Reference proteome</keyword>
<accession>Q0W278</accession>